<comment type="function">
    <text evidence="1">Binds to the 23S rRNA.</text>
</comment>
<comment type="similarity">
    <text evidence="1">Belongs to the bacterial ribosomal protein bL9 family.</text>
</comment>
<reference key="1">
    <citation type="submission" date="2007-11" db="EMBL/GenBank/DDBJ databases">
        <authorList>
            <consortium name="The Salmonella enterica serovar Paratyphi B Genome Sequencing Project"/>
            <person name="McClelland M."/>
            <person name="Sanderson E.K."/>
            <person name="Porwollik S."/>
            <person name="Spieth J."/>
            <person name="Clifton W.S."/>
            <person name="Fulton R."/>
            <person name="Cordes M."/>
            <person name="Wollam A."/>
            <person name="Shah N."/>
            <person name="Pepin K."/>
            <person name="Bhonagiri V."/>
            <person name="Nash W."/>
            <person name="Johnson M."/>
            <person name="Thiruvilangam P."/>
            <person name="Wilson R."/>
        </authorList>
    </citation>
    <scope>NUCLEOTIDE SEQUENCE [LARGE SCALE GENOMIC DNA]</scope>
    <source>
        <strain>ATCC BAA-1250 / SPB7</strain>
    </source>
</reference>
<name>RL9_SALPB</name>
<accession>A9N521</accession>
<proteinExistence type="inferred from homology"/>
<feature type="chain" id="PRO_1000081498" description="Large ribosomal subunit protein bL9">
    <location>
        <begin position="1"/>
        <end position="149"/>
    </location>
</feature>
<keyword id="KW-0687">Ribonucleoprotein</keyword>
<keyword id="KW-0689">Ribosomal protein</keyword>
<keyword id="KW-0694">RNA-binding</keyword>
<keyword id="KW-0699">rRNA-binding</keyword>
<evidence type="ECO:0000255" key="1">
    <source>
        <dbReference type="HAMAP-Rule" id="MF_00503"/>
    </source>
</evidence>
<evidence type="ECO:0000305" key="2"/>
<dbReference type="EMBL" id="CP000886">
    <property type="protein sequence ID" value="ABX70798.1"/>
    <property type="molecule type" value="Genomic_DNA"/>
</dbReference>
<dbReference type="RefSeq" id="WP_001196059.1">
    <property type="nucleotide sequence ID" value="NC_010102.1"/>
</dbReference>
<dbReference type="SMR" id="A9N521"/>
<dbReference type="KEGG" id="spq:SPAB_05529"/>
<dbReference type="PATRIC" id="fig|1016998.12.peg.5182"/>
<dbReference type="HOGENOM" id="CLU_078938_4_1_6"/>
<dbReference type="BioCyc" id="SENT1016998:SPAB_RS22580-MONOMER"/>
<dbReference type="Proteomes" id="UP000008556">
    <property type="component" value="Chromosome"/>
</dbReference>
<dbReference type="GO" id="GO:1990904">
    <property type="term" value="C:ribonucleoprotein complex"/>
    <property type="evidence" value="ECO:0007669"/>
    <property type="project" value="UniProtKB-KW"/>
</dbReference>
<dbReference type="GO" id="GO:0005840">
    <property type="term" value="C:ribosome"/>
    <property type="evidence" value="ECO:0007669"/>
    <property type="project" value="UniProtKB-KW"/>
</dbReference>
<dbReference type="GO" id="GO:0019843">
    <property type="term" value="F:rRNA binding"/>
    <property type="evidence" value="ECO:0007669"/>
    <property type="project" value="UniProtKB-UniRule"/>
</dbReference>
<dbReference type="GO" id="GO:0003735">
    <property type="term" value="F:structural constituent of ribosome"/>
    <property type="evidence" value="ECO:0007669"/>
    <property type="project" value="InterPro"/>
</dbReference>
<dbReference type="GO" id="GO:0006412">
    <property type="term" value="P:translation"/>
    <property type="evidence" value="ECO:0007669"/>
    <property type="project" value="UniProtKB-UniRule"/>
</dbReference>
<dbReference type="FunFam" id="3.10.430.100:FF:000001">
    <property type="entry name" value="50S ribosomal protein L9"/>
    <property type="match status" value="1"/>
</dbReference>
<dbReference type="FunFam" id="3.40.5.10:FF:000001">
    <property type="entry name" value="50S ribosomal protein L9"/>
    <property type="match status" value="1"/>
</dbReference>
<dbReference type="Gene3D" id="3.10.430.100">
    <property type="entry name" value="Ribosomal protein L9, C-terminal domain"/>
    <property type="match status" value="1"/>
</dbReference>
<dbReference type="Gene3D" id="3.40.5.10">
    <property type="entry name" value="Ribosomal protein L9, N-terminal domain"/>
    <property type="match status" value="1"/>
</dbReference>
<dbReference type="HAMAP" id="MF_00503">
    <property type="entry name" value="Ribosomal_bL9"/>
    <property type="match status" value="1"/>
</dbReference>
<dbReference type="InterPro" id="IPR000244">
    <property type="entry name" value="Ribosomal_bL9"/>
</dbReference>
<dbReference type="InterPro" id="IPR009027">
    <property type="entry name" value="Ribosomal_bL9/RNase_H1_N"/>
</dbReference>
<dbReference type="InterPro" id="IPR020594">
    <property type="entry name" value="Ribosomal_bL9_bac/chp"/>
</dbReference>
<dbReference type="InterPro" id="IPR020069">
    <property type="entry name" value="Ribosomal_bL9_C"/>
</dbReference>
<dbReference type="InterPro" id="IPR036791">
    <property type="entry name" value="Ribosomal_bL9_C_sf"/>
</dbReference>
<dbReference type="InterPro" id="IPR020070">
    <property type="entry name" value="Ribosomal_bL9_N"/>
</dbReference>
<dbReference type="InterPro" id="IPR036935">
    <property type="entry name" value="Ribosomal_bL9_N_sf"/>
</dbReference>
<dbReference type="NCBIfam" id="TIGR00158">
    <property type="entry name" value="L9"/>
    <property type="match status" value="1"/>
</dbReference>
<dbReference type="PANTHER" id="PTHR21368">
    <property type="entry name" value="50S RIBOSOMAL PROTEIN L9"/>
    <property type="match status" value="1"/>
</dbReference>
<dbReference type="Pfam" id="PF03948">
    <property type="entry name" value="Ribosomal_L9_C"/>
    <property type="match status" value="1"/>
</dbReference>
<dbReference type="Pfam" id="PF01281">
    <property type="entry name" value="Ribosomal_L9_N"/>
    <property type="match status" value="1"/>
</dbReference>
<dbReference type="SUPFAM" id="SSF55658">
    <property type="entry name" value="L9 N-domain-like"/>
    <property type="match status" value="1"/>
</dbReference>
<dbReference type="SUPFAM" id="SSF55653">
    <property type="entry name" value="Ribosomal protein L9 C-domain"/>
    <property type="match status" value="1"/>
</dbReference>
<dbReference type="PROSITE" id="PS00651">
    <property type="entry name" value="RIBOSOMAL_L9"/>
    <property type="match status" value="1"/>
</dbReference>
<protein>
    <recommendedName>
        <fullName evidence="1">Large ribosomal subunit protein bL9</fullName>
    </recommendedName>
    <alternativeName>
        <fullName evidence="2">50S ribosomal protein L9</fullName>
    </alternativeName>
</protein>
<gene>
    <name evidence="1" type="primary">rplI</name>
    <name type="ordered locus">SPAB_05529</name>
</gene>
<organism>
    <name type="scientific">Salmonella paratyphi B (strain ATCC BAA-1250 / SPB7)</name>
    <dbReference type="NCBI Taxonomy" id="1016998"/>
    <lineage>
        <taxon>Bacteria</taxon>
        <taxon>Pseudomonadati</taxon>
        <taxon>Pseudomonadota</taxon>
        <taxon>Gammaproteobacteria</taxon>
        <taxon>Enterobacterales</taxon>
        <taxon>Enterobacteriaceae</taxon>
        <taxon>Salmonella</taxon>
    </lineage>
</organism>
<sequence>MQVILLDKVANLGSLGDQVNVKAGYARNFLVPKGKAVPATKKNVEYFEARRAELEAKLADVLAAANARAEKINALETVTIASKAGDEGKLFGSIGTRDIADAVTAAGVDVAKSEVRLPNGVLRTTGEHEVNFQVHSEVFAKVIINVVAE</sequence>